<keyword id="KW-0030">Aminoacyl-tRNA synthetase</keyword>
<keyword id="KW-0067">ATP-binding</keyword>
<keyword id="KW-0963">Cytoplasm</keyword>
<keyword id="KW-0436">Ligase</keyword>
<keyword id="KW-0479">Metal-binding</keyword>
<keyword id="KW-0547">Nucleotide-binding</keyword>
<keyword id="KW-0648">Protein biosynthesis</keyword>
<keyword id="KW-1185">Reference proteome</keyword>
<keyword id="KW-0862">Zinc</keyword>
<protein>
    <recommendedName>
        <fullName evidence="1">Isoleucine--tRNA ligase</fullName>
        <ecNumber evidence="1">6.1.1.5</ecNumber>
    </recommendedName>
    <alternativeName>
        <fullName evidence="1">Isoleucyl-tRNA synthetase</fullName>
        <shortName evidence="1">IleRS</shortName>
    </alternativeName>
</protein>
<evidence type="ECO:0000255" key="1">
    <source>
        <dbReference type="HAMAP-Rule" id="MF_02002"/>
    </source>
</evidence>
<name>SYI_XANOR</name>
<reference key="1">
    <citation type="journal article" date="2005" name="Nucleic Acids Res.">
        <title>The genome sequence of Xanthomonas oryzae pathovar oryzae KACC10331, the bacterial blight pathogen of rice.</title>
        <authorList>
            <person name="Lee B.-M."/>
            <person name="Park Y.-J."/>
            <person name="Park D.-S."/>
            <person name="Kang H.-W."/>
            <person name="Kim J.-G."/>
            <person name="Song E.-S."/>
            <person name="Park I.-C."/>
            <person name="Yoon U.-H."/>
            <person name="Hahn J.-H."/>
            <person name="Koo B.-S."/>
            <person name="Lee G.-B."/>
            <person name="Kim H."/>
            <person name="Park H.-S."/>
            <person name="Yoon K.-O."/>
            <person name="Kim J.-H."/>
            <person name="Jung C.-H."/>
            <person name="Koh N.-H."/>
            <person name="Seo J.-S."/>
            <person name="Go S.-J."/>
        </authorList>
    </citation>
    <scope>NUCLEOTIDE SEQUENCE [LARGE SCALE GENOMIC DNA]</scope>
    <source>
        <strain>KACC10331 / KXO85</strain>
    </source>
</reference>
<gene>
    <name evidence="1" type="primary">ileS</name>
    <name type="ordered locus">XOO1626</name>
</gene>
<accession>Q5H2E1</accession>
<comment type="function">
    <text evidence="1">Catalyzes the attachment of isoleucine to tRNA(Ile). As IleRS can inadvertently accommodate and process structurally similar amino acids such as valine, to avoid such errors it has two additional distinct tRNA(Ile)-dependent editing activities. One activity is designated as 'pretransfer' editing and involves the hydrolysis of activated Val-AMP. The other activity is designated 'posttransfer' editing and involves deacylation of mischarged Val-tRNA(Ile).</text>
</comment>
<comment type="catalytic activity">
    <reaction evidence="1">
        <text>tRNA(Ile) + L-isoleucine + ATP = L-isoleucyl-tRNA(Ile) + AMP + diphosphate</text>
        <dbReference type="Rhea" id="RHEA:11060"/>
        <dbReference type="Rhea" id="RHEA-COMP:9666"/>
        <dbReference type="Rhea" id="RHEA-COMP:9695"/>
        <dbReference type="ChEBI" id="CHEBI:30616"/>
        <dbReference type="ChEBI" id="CHEBI:33019"/>
        <dbReference type="ChEBI" id="CHEBI:58045"/>
        <dbReference type="ChEBI" id="CHEBI:78442"/>
        <dbReference type="ChEBI" id="CHEBI:78528"/>
        <dbReference type="ChEBI" id="CHEBI:456215"/>
        <dbReference type="EC" id="6.1.1.5"/>
    </reaction>
</comment>
<comment type="cofactor">
    <cofactor evidence="1">
        <name>Zn(2+)</name>
        <dbReference type="ChEBI" id="CHEBI:29105"/>
    </cofactor>
    <text evidence="1">Binds 1 zinc ion per subunit.</text>
</comment>
<comment type="subunit">
    <text evidence="1">Monomer.</text>
</comment>
<comment type="subcellular location">
    <subcellularLocation>
        <location evidence="1">Cytoplasm</location>
    </subcellularLocation>
</comment>
<comment type="domain">
    <text evidence="1">IleRS has two distinct active sites: one for aminoacylation and one for editing. The misactivated valine is translocated from the active site to the editing site, which sterically excludes the correctly activated isoleucine. The single editing site contains two valyl binding pockets, one specific for each substrate (Val-AMP or Val-tRNA(Ile)).</text>
</comment>
<comment type="similarity">
    <text evidence="1">Belongs to the class-I aminoacyl-tRNA synthetase family. IleS type 1 subfamily.</text>
</comment>
<organism>
    <name type="scientific">Xanthomonas oryzae pv. oryzae (strain KACC10331 / KXO85)</name>
    <dbReference type="NCBI Taxonomy" id="291331"/>
    <lineage>
        <taxon>Bacteria</taxon>
        <taxon>Pseudomonadati</taxon>
        <taxon>Pseudomonadota</taxon>
        <taxon>Gammaproteobacteria</taxon>
        <taxon>Lysobacterales</taxon>
        <taxon>Lysobacteraceae</taxon>
        <taxon>Xanthomonas</taxon>
    </lineage>
</organism>
<proteinExistence type="inferred from homology"/>
<sequence length="943" mass="104419">MTQDYKATLHLPATEFPMRGDLPKREPAMLERWEREGFYAQLRANAAGRPLFVLHDGPPYANGQIHLGHAVNKILKDIIVKSKCLAGFDAPYIPGWDCHGLPIEIAIEKKYGKVGVKLDAAEFRQKCREYATEQIDLQRRDFKRLGVIGDWDNPYKTLDFRFEANEIRALAKVVDNGHLTRGVKPVHWCFDCGSALAEAEIEYADKVSPTVDIAYPARDPGAVAAAFGATLPGGVGVAVPIWTTTPWTLPASLAVSLGAELDYVLVEGPADRGQPRWLVIAEALAAKALARYGVDEVVVHGHAKGTALEQMLLNHPFYAEREIPLLLGDHVSAEDGTGAVHTAPGHGQEDYQVSKQYGLLERYGAAQINPVDGRGVYLPSTPPLGDTVLAGLHIWKANDVIIEALHGTGVLLAASKMEHSYPHCWRHKTPIAFRATPQWFISMEQANLRADALKAIESVHWYPSWGQARIAGMVDGRPDWTISRQRTWGVPIALFVHRETGEPHPRSTELLRQVADRVELGGVDVWYTLDAAELLGDEAADYDKITDILDVWFDSGVTHEAVLVDRGLPKPADLYLEGSDQHRGWFQSSLLSGVAMDKAAPYKQCLTHGFTVDEHGRKMSKSLGNGIEPQDIMKTLGADILRLWIASADYSNEMSLSQEILKRNADAYRRLRNTARFLLGNLHGFDPLQHLVALEDMVLLDRWIVHRAHELQEKIVAAYARYDFAEIVQALLNFCSVDLGSLYLDVTKDRLYTMAEDARGRRSAQSAMYHVAEAFVRWIAPVMSFTADELWGYLPGKHVGNVLFATWYGGLAPLPADAALTSADFDKLLALREQVSKVLEPMRANGAIGAALEAEITVAADVQTAARWQPLAEELRFLFISGDVTVTAASTDDIFVSAQPTTKAKCVRCWHHQSSVGSDPRHPELCSRCVSNIEGPGEERRWF</sequence>
<dbReference type="EC" id="6.1.1.5" evidence="1"/>
<dbReference type="EMBL" id="AE013598">
    <property type="protein sequence ID" value="AAW74880.1"/>
    <property type="molecule type" value="Genomic_DNA"/>
</dbReference>
<dbReference type="SMR" id="Q5H2E1"/>
<dbReference type="STRING" id="291331.XOO1626"/>
<dbReference type="KEGG" id="xoo:XOO1626"/>
<dbReference type="HOGENOM" id="CLU_001493_7_1_6"/>
<dbReference type="Proteomes" id="UP000006735">
    <property type="component" value="Chromosome"/>
</dbReference>
<dbReference type="GO" id="GO:0005829">
    <property type="term" value="C:cytosol"/>
    <property type="evidence" value="ECO:0007669"/>
    <property type="project" value="TreeGrafter"/>
</dbReference>
<dbReference type="GO" id="GO:0002161">
    <property type="term" value="F:aminoacyl-tRNA deacylase activity"/>
    <property type="evidence" value="ECO:0007669"/>
    <property type="project" value="InterPro"/>
</dbReference>
<dbReference type="GO" id="GO:0005524">
    <property type="term" value="F:ATP binding"/>
    <property type="evidence" value="ECO:0007669"/>
    <property type="project" value="UniProtKB-UniRule"/>
</dbReference>
<dbReference type="GO" id="GO:0004822">
    <property type="term" value="F:isoleucine-tRNA ligase activity"/>
    <property type="evidence" value="ECO:0007669"/>
    <property type="project" value="UniProtKB-UniRule"/>
</dbReference>
<dbReference type="GO" id="GO:0000049">
    <property type="term" value="F:tRNA binding"/>
    <property type="evidence" value="ECO:0007669"/>
    <property type="project" value="InterPro"/>
</dbReference>
<dbReference type="GO" id="GO:0008270">
    <property type="term" value="F:zinc ion binding"/>
    <property type="evidence" value="ECO:0007669"/>
    <property type="project" value="UniProtKB-UniRule"/>
</dbReference>
<dbReference type="GO" id="GO:0006428">
    <property type="term" value="P:isoleucyl-tRNA aminoacylation"/>
    <property type="evidence" value="ECO:0007669"/>
    <property type="project" value="UniProtKB-UniRule"/>
</dbReference>
<dbReference type="CDD" id="cd07960">
    <property type="entry name" value="Anticodon_Ia_Ile_BEm"/>
    <property type="match status" value="1"/>
</dbReference>
<dbReference type="FunFam" id="1.10.730.20:FF:000001">
    <property type="entry name" value="Isoleucine--tRNA ligase"/>
    <property type="match status" value="1"/>
</dbReference>
<dbReference type="FunFam" id="3.40.50.620:FF:000042">
    <property type="entry name" value="Isoleucine--tRNA ligase"/>
    <property type="match status" value="1"/>
</dbReference>
<dbReference type="FunFam" id="3.40.50.620:FF:000048">
    <property type="entry name" value="Isoleucine--tRNA ligase"/>
    <property type="match status" value="1"/>
</dbReference>
<dbReference type="FunFam" id="3.90.740.10:FF:000022">
    <property type="entry name" value="Isoleucine--tRNA ligase"/>
    <property type="match status" value="1"/>
</dbReference>
<dbReference type="Gene3D" id="1.10.730.20">
    <property type="match status" value="1"/>
</dbReference>
<dbReference type="Gene3D" id="3.40.50.620">
    <property type="entry name" value="HUPs"/>
    <property type="match status" value="2"/>
</dbReference>
<dbReference type="Gene3D" id="3.90.740.10">
    <property type="entry name" value="Valyl/Leucyl/Isoleucyl-tRNA synthetase, editing domain"/>
    <property type="match status" value="1"/>
</dbReference>
<dbReference type="HAMAP" id="MF_02002">
    <property type="entry name" value="Ile_tRNA_synth_type1"/>
    <property type="match status" value="1"/>
</dbReference>
<dbReference type="InterPro" id="IPR001412">
    <property type="entry name" value="aa-tRNA-synth_I_CS"/>
</dbReference>
<dbReference type="InterPro" id="IPR002300">
    <property type="entry name" value="aa-tRNA-synth_Ia"/>
</dbReference>
<dbReference type="InterPro" id="IPR033708">
    <property type="entry name" value="Anticodon_Ile_BEm"/>
</dbReference>
<dbReference type="InterPro" id="IPR002301">
    <property type="entry name" value="Ile-tRNA-ligase"/>
</dbReference>
<dbReference type="InterPro" id="IPR023585">
    <property type="entry name" value="Ile-tRNA-ligase_type1"/>
</dbReference>
<dbReference type="InterPro" id="IPR050081">
    <property type="entry name" value="Ile-tRNA_ligase"/>
</dbReference>
<dbReference type="InterPro" id="IPR013155">
    <property type="entry name" value="M/V/L/I-tRNA-synth_anticd-bd"/>
</dbReference>
<dbReference type="InterPro" id="IPR014729">
    <property type="entry name" value="Rossmann-like_a/b/a_fold"/>
</dbReference>
<dbReference type="InterPro" id="IPR009080">
    <property type="entry name" value="tRNAsynth_Ia_anticodon-bd"/>
</dbReference>
<dbReference type="InterPro" id="IPR009008">
    <property type="entry name" value="Val/Leu/Ile-tRNA-synth_edit"/>
</dbReference>
<dbReference type="InterPro" id="IPR010663">
    <property type="entry name" value="Znf_FPG/IleRS"/>
</dbReference>
<dbReference type="NCBIfam" id="TIGR00392">
    <property type="entry name" value="ileS"/>
    <property type="match status" value="1"/>
</dbReference>
<dbReference type="PANTHER" id="PTHR42765:SF1">
    <property type="entry name" value="ISOLEUCINE--TRNA LIGASE, MITOCHONDRIAL"/>
    <property type="match status" value="1"/>
</dbReference>
<dbReference type="PANTHER" id="PTHR42765">
    <property type="entry name" value="SOLEUCYL-TRNA SYNTHETASE"/>
    <property type="match status" value="1"/>
</dbReference>
<dbReference type="Pfam" id="PF08264">
    <property type="entry name" value="Anticodon_1"/>
    <property type="match status" value="1"/>
</dbReference>
<dbReference type="Pfam" id="PF00133">
    <property type="entry name" value="tRNA-synt_1"/>
    <property type="match status" value="1"/>
</dbReference>
<dbReference type="Pfam" id="PF06827">
    <property type="entry name" value="zf-FPG_IleRS"/>
    <property type="match status" value="1"/>
</dbReference>
<dbReference type="PRINTS" id="PR00984">
    <property type="entry name" value="TRNASYNTHILE"/>
</dbReference>
<dbReference type="SUPFAM" id="SSF47323">
    <property type="entry name" value="Anticodon-binding domain of a subclass of class I aminoacyl-tRNA synthetases"/>
    <property type="match status" value="1"/>
</dbReference>
<dbReference type="SUPFAM" id="SSF52374">
    <property type="entry name" value="Nucleotidylyl transferase"/>
    <property type="match status" value="1"/>
</dbReference>
<dbReference type="SUPFAM" id="SSF50677">
    <property type="entry name" value="ValRS/IleRS/LeuRS editing domain"/>
    <property type="match status" value="1"/>
</dbReference>
<dbReference type="PROSITE" id="PS00178">
    <property type="entry name" value="AA_TRNA_LIGASE_I"/>
    <property type="match status" value="1"/>
</dbReference>
<feature type="chain" id="PRO_0000098508" description="Isoleucine--tRNA ligase">
    <location>
        <begin position="1"/>
        <end position="943"/>
    </location>
</feature>
<feature type="short sequence motif" description="'HIGH' region">
    <location>
        <begin position="59"/>
        <end position="69"/>
    </location>
</feature>
<feature type="short sequence motif" description="'KMSKS' region">
    <location>
        <begin position="618"/>
        <end position="622"/>
    </location>
</feature>
<feature type="binding site" evidence="1">
    <location>
        <position position="577"/>
    </location>
    <ligand>
        <name>L-isoleucyl-5'-AMP</name>
        <dbReference type="ChEBI" id="CHEBI:178002"/>
    </ligand>
</feature>
<feature type="binding site" evidence="1">
    <location>
        <position position="621"/>
    </location>
    <ligand>
        <name>ATP</name>
        <dbReference type="ChEBI" id="CHEBI:30616"/>
    </ligand>
</feature>
<feature type="binding site" evidence="1">
    <location>
        <position position="906"/>
    </location>
    <ligand>
        <name>Zn(2+)</name>
        <dbReference type="ChEBI" id="CHEBI:29105"/>
    </ligand>
</feature>
<feature type="binding site" evidence="1">
    <location>
        <position position="909"/>
    </location>
    <ligand>
        <name>Zn(2+)</name>
        <dbReference type="ChEBI" id="CHEBI:29105"/>
    </ligand>
</feature>
<feature type="binding site" evidence="1">
    <location>
        <position position="926"/>
    </location>
    <ligand>
        <name>Zn(2+)</name>
        <dbReference type="ChEBI" id="CHEBI:29105"/>
    </ligand>
</feature>
<feature type="binding site" evidence="1">
    <location>
        <position position="929"/>
    </location>
    <ligand>
        <name>Zn(2+)</name>
        <dbReference type="ChEBI" id="CHEBI:29105"/>
    </ligand>
</feature>